<name>TCPB_SCHPO</name>
<comment type="function">
    <text evidence="1">Molecular chaperone; assists the folding of proteins upon ATP hydrolysis. Known to play a role, in vitro, in the folding of actin and tubulin (By similarity).</text>
</comment>
<comment type="subunit">
    <text evidence="2">Heterooligomeric complex of about 850 to 900 kDa that forms two stacked rings, 12 to 16 nm in diameter.</text>
</comment>
<comment type="subcellular location">
    <subcellularLocation>
        <location evidence="2">Cytoplasm</location>
    </subcellularLocation>
</comment>
<comment type="similarity">
    <text evidence="2">Belongs to the TCP-1 chaperonin family.</text>
</comment>
<organism>
    <name type="scientific">Schizosaccharomyces pombe (strain 972 / ATCC 24843)</name>
    <name type="common">Fission yeast</name>
    <dbReference type="NCBI Taxonomy" id="284812"/>
    <lineage>
        <taxon>Eukaryota</taxon>
        <taxon>Fungi</taxon>
        <taxon>Dikarya</taxon>
        <taxon>Ascomycota</taxon>
        <taxon>Taphrinomycotina</taxon>
        <taxon>Schizosaccharomycetes</taxon>
        <taxon>Schizosaccharomycetales</taxon>
        <taxon>Schizosaccharomycetaceae</taxon>
        <taxon>Schizosaccharomyces</taxon>
    </lineage>
</organism>
<sequence length="527" mass="56677">MSLNPHQIFNESGIQERGENARLSSFVGAIAVGDLVKSTLGPKGMDKILQSNSSGDIVVTNDGATILKSIALDNAAAKVLVNISKVQDDEVGDGTTSVCVFAAELLRQAEIMVNAKIHPQVIIDGYRIATKTAIDALRASSIDNSSDPAKFRSDLENIARTTLSSKILSQNKNHFAQLAVDAVLRLKGSTNLDNIQIIKILGGKLDDSFLDEGFILNKTIGVNCPKVMENANILIANTAMDTDKVKVFGARVRVDTTGKLAELERAEREKMKAKVEKIKSHNINCFINRQLIYNWPEQLFADAGIMSIEHADFDGIERLSLVTGGEIASTFDHPELVKLGHCKKIEEIIIGEDKMIKFSGVEAGEACTIVLRGATHQLLDESERAIHDALAVLSQTVAESRVTLGGGCAEMLMAKAVEEAATHEPGKKAVAVSAFAKALSQLPTILADNAGFDSSELVAQLKAAHYDGNDTMGLDMDEGEIADMRAKGILEALKLKQAVVSSGSEGAQLLLRVDTILKAAPRPRERM</sequence>
<feature type="chain" id="PRO_0000128319" description="Probable T-complex protein 1 subunit beta">
    <location>
        <begin position="1"/>
        <end position="527"/>
    </location>
</feature>
<gene>
    <name type="primary">cct2</name>
    <name type="ORF">SPAC1D4.04</name>
</gene>
<reference key="1">
    <citation type="journal article" date="2002" name="Nature">
        <title>The genome sequence of Schizosaccharomyces pombe.</title>
        <authorList>
            <person name="Wood V."/>
            <person name="Gwilliam R."/>
            <person name="Rajandream M.A."/>
            <person name="Lyne M.H."/>
            <person name="Lyne R."/>
            <person name="Stewart A."/>
            <person name="Sgouros J.G."/>
            <person name="Peat N."/>
            <person name="Hayles J."/>
            <person name="Baker S.G."/>
            <person name="Basham D."/>
            <person name="Bowman S."/>
            <person name="Brooks K."/>
            <person name="Brown D."/>
            <person name="Brown S."/>
            <person name="Chillingworth T."/>
            <person name="Churcher C.M."/>
            <person name="Collins M."/>
            <person name="Connor R."/>
            <person name="Cronin A."/>
            <person name="Davis P."/>
            <person name="Feltwell T."/>
            <person name="Fraser A."/>
            <person name="Gentles S."/>
            <person name="Goble A."/>
            <person name="Hamlin N."/>
            <person name="Harris D.E."/>
            <person name="Hidalgo J."/>
            <person name="Hodgson G."/>
            <person name="Holroyd S."/>
            <person name="Hornsby T."/>
            <person name="Howarth S."/>
            <person name="Huckle E.J."/>
            <person name="Hunt S."/>
            <person name="Jagels K."/>
            <person name="James K.D."/>
            <person name="Jones L."/>
            <person name="Jones M."/>
            <person name="Leather S."/>
            <person name="McDonald S."/>
            <person name="McLean J."/>
            <person name="Mooney P."/>
            <person name="Moule S."/>
            <person name="Mungall K.L."/>
            <person name="Murphy L.D."/>
            <person name="Niblett D."/>
            <person name="Odell C."/>
            <person name="Oliver K."/>
            <person name="O'Neil S."/>
            <person name="Pearson D."/>
            <person name="Quail M.A."/>
            <person name="Rabbinowitsch E."/>
            <person name="Rutherford K.M."/>
            <person name="Rutter S."/>
            <person name="Saunders D."/>
            <person name="Seeger K."/>
            <person name="Sharp S."/>
            <person name="Skelton J."/>
            <person name="Simmonds M.N."/>
            <person name="Squares R."/>
            <person name="Squares S."/>
            <person name="Stevens K."/>
            <person name="Taylor K."/>
            <person name="Taylor R.G."/>
            <person name="Tivey A."/>
            <person name="Walsh S.V."/>
            <person name="Warren T."/>
            <person name="Whitehead S."/>
            <person name="Woodward J.R."/>
            <person name="Volckaert G."/>
            <person name="Aert R."/>
            <person name="Robben J."/>
            <person name="Grymonprez B."/>
            <person name="Weltjens I."/>
            <person name="Vanstreels E."/>
            <person name="Rieger M."/>
            <person name="Schaefer M."/>
            <person name="Mueller-Auer S."/>
            <person name="Gabel C."/>
            <person name="Fuchs M."/>
            <person name="Duesterhoeft A."/>
            <person name="Fritzc C."/>
            <person name="Holzer E."/>
            <person name="Moestl D."/>
            <person name="Hilbert H."/>
            <person name="Borzym K."/>
            <person name="Langer I."/>
            <person name="Beck A."/>
            <person name="Lehrach H."/>
            <person name="Reinhardt R."/>
            <person name="Pohl T.M."/>
            <person name="Eger P."/>
            <person name="Zimmermann W."/>
            <person name="Wedler H."/>
            <person name="Wambutt R."/>
            <person name="Purnelle B."/>
            <person name="Goffeau A."/>
            <person name="Cadieu E."/>
            <person name="Dreano S."/>
            <person name="Gloux S."/>
            <person name="Lelaure V."/>
            <person name="Mottier S."/>
            <person name="Galibert F."/>
            <person name="Aves S.J."/>
            <person name="Xiang Z."/>
            <person name="Hunt C."/>
            <person name="Moore K."/>
            <person name="Hurst S.M."/>
            <person name="Lucas M."/>
            <person name="Rochet M."/>
            <person name="Gaillardin C."/>
            <person name="Tallada V.A."/>
            <person name="Garzon A."/>
            <person name="Thode G."/>
            <person name="Daga R.R."/>
            <person name="Cruzado L."/>
            <person name="Jimenez J."/>
            <person name="Sanchez M."/>
            <person name="del Rey F."/>
            <person name="Benito J."/>
            <person name="Dominguez A."/>
            <person name="Revuelta J.L."/>
            <person name="Moreno S."/>
            <person name="Armstrong J."/>
            <person name="Forsburg S.L."/>
            <person name="Cerutti L."/>
            <person name="Lowe T."/>
            <person name="McCombie W.R."/>
            <person name="Paulsen I."/>
            <person name="Potashkin J."/>
            <person name="Shpakovski G.V."/>
            <person name="Ussery D."/>
            <person name="Barrell B.G."/>
            <person name="Nurse P."/>
        </authorList>
    </citation>
    <scope>NUCLEOTIDE SEQUENCE [LARGE SCALE GENOMIC DNA]</scope>
    <source>
        <strain>972 / ATCC 24843</strain>
    </source>
</reference>
<protein>
    <recommendedName>
        <fullName>Probable T-complex protein 1 subunit beta</fullName>
        <shortName>TCP-1-beta</shortName>
    </recommendedName>
    <alternativeName>
        <fullName>CCT-beta</fullName>
    </alternativeName>
</protein>
<proteinExistence type="inferred from homology"/>
<accession>Q10147</accession>
<evidence type="ECO:0000250" key="1"/>
<evidence type="ECO:0000305" key="2"/>
<keyword id="KW-0067">ATP-binding</keyword>
<keyword id="KW-0143">Chaperone</keyword>
<keyword id="KW-0963">Cytoplasm</keyword>
<keyword id="KW-0547">Nucleotide-binding</keyword>
<keyword id="KW-1185">Reference proteome</keyword>
<dbReference type="EMBL" id="CU329670">
    <property type="protein sequence ID" value="CAA93213.1"/>
    <property type="molecule type" value="Genomic_DNA"/>
</dbReference>
<dbReference type="PIR" id="T38045">
    <property type="entry name" value="T38045"/>
</dbReference>
<dbReference type="RefSeq" id="NP_593017.1">
    <property type="nucleotide sequence ID" value="NM_001018416.2"/>
</dbReference>
<dbReference type="SMR" id="Q10147"/>
<dbReference type="BioGRID" id="278686">
    <property type="interactions" value="6"/>
</dbReference>
<dbReference type="FunCoup" id="Q10147">
    <property type="interactions" value="912"/>
</dbReference>
<dbReference type="STRING" id="284812.Q10147"/>
<dbReference type="iPTMnet" id="Q10147"/>
<dbReference type="PaxDb" id="4896-SPAC1D4.04.1"/>
<dbReference type="EnsemblFungi" id="SPAC1D4.04.1">
    <property type="protein sequence ID" value="SPAC1D4.04.1:pep"/>
    <property type="gene ID" value="SPAC1D4.04"/>
</dbReference>
<dbReference type="GeneID" id="2542212"/>
<dbReference type="KEGG" id="spo:2542212"/>
<dbReference type="PomBase" id="SPAC1D4.04">
    <property type="gene designation" value="cct2"/>
</dbReference>
<dbReference type="VEuPathDB" id="FungiDB:SPAC1D4.04"/>
<dbReference type="eggNOG" id="KOG0363">
    <property type="taxonomic scope" value="Eukaryota"/>
</dbReference>
<dbReference type="HOGENOM" id="CLU_008891_6_2_1"/>
<dbReference type="InParanoid" id="Q10147"/>
<dbReference type="OMA" id="CAEMVMS"/>
<dbReference type="PhylomeDB" id="Q10147"/>
<dbReference type="Reactome" id="R-SPO-390471">
    <property type="pathway name" value="Association of TriC/CCT with target proteins during biosynthesis"/>
</dbReference>
<dbReference type="Reactome" id="R-SPO-6798695">
    <property type="pathway name" value="Neutrophil degranulation"/>
</dbReference>
<dbReference type="Reactome" id="R-SPO-6814122">
    <property type="pathway name" value="Cooperation of PDCL (PhLP1) and TRiC/CCT in G-protein beta folding"/>
</dbReference>
<dbReference type="PRO" id="PR:Q10147"/>
<dbReference type="Proteomes" id="UP000002485">
    <property type="component" value="Chromosome I"/>
</dbReference>
<dbReference type="GO" id="GO:0005832">
    <property type="term" value="C:chaperonin-containing T-complex"/>
    <property type="evidence" value="ECO:0000314"/>
    <property type="project" value="PomBase"/>
</dbReference>
<dbReference type="GO" id="GO:0005856">
    <property type="term" value="C:cytoskeleton"/>
    <property type="evidence" value="ECO:0000266"/>
    <property type="project" value="PomBase"/>
</dbReference>
<dbReference type="GO" id="GO:0005829">
    <property type="term" value="C:cytosol"/>
    <property type="evidence" value="ECO:0007005"/>
    <property type="project" value="PomBase"/>
</dbReference>
<dbReference type="GO" id="GO:0005634">
    <property type="term" value="C:nucleus"/>
    <property type="evidence" value="ECO:0007005"/>
    <property type="project" value="PomBase"/>
</dbReference>
<dbReference type="GO" id="GO:0005524">
    <property type="term" value="F:ATP binding"/>
    <property type="evidence" value="ECO:0000255"/>
    <property type="project" value="PomBase"/>
</dbReference>
<dbReference type="GO" id="GO:0016887">
    <property type="term" value="F:ATP hydrolysis activity"/>
    <property type="evidence" value="ECO:0007669"/>
    <property type="project" value="InterPro"/>
</dbReference>
<dbReference type="GO" id="GO:0140662">
    <property type="term" value="F:ATP-dependent protein folding chaperone"/>
    <property type="evidence" value="ECO:0007669"/>
    <property type="project" value="InterPro"/>
</dbReference>
<dbReference type="GO" id="GO:0051082">
    <property type="term" value="F:unfolded protein binding"/>
    <property type="evidence" value="ECO:0000318"/>
    <property type="project" value="GO_Central"/>
</dbReference>
<dbReference type="GO" id="GO:0006457">
    <property type="term" value="P:protein folding"/>
    <property type="evidence" value="ECO:0000318"/>
    <property type="project" value="GO_Central"/>
</dbReference>
<dbReference type="CDD" id="cd03336">
    <property type="entry name" value="TCP1_beta"/>
    <property type="match status" value="1"/>
</dbReference>
<dbReference type="FunFam" id="3.30.260.10:FF:000025">
    <property type="entry name" value="Chaperonin containing TCP1 subunit 2"/>
    <property type="match status" value="1"/>
</dbReference>
<dbReference type="FunFam" id="3.50.7.10:FF:000002">
    <property type="entry name" value="T-complex protein 1 subunit beta"/>
    <property type="match status" value="1"/>
</dbReference>
<dbReference type="FunFam" id="1.10.560.10:FF:000017">
    <property type="entry name" value="T-complex protein 1 subunit eta"/>
    <property type="match status" value="1"/>
</dbReference>
<dbReference type="Gene3D" id="3.50.7.10">
    <property type="entry name" value="GroEL"/>
    <property type="match status" value="1"/>
</dbReference>
<dbReference type="Gene3D" id="1.10.560.10">
    <property type="entry name" value="GroEL-like equatorial domain"/>
    <property type="match status" value="1"/>
</dbReference>
<dbReference type="Gene3D" id="3.30.260.10">
    <property type="entry name" value="TCP-1-like chaperonin intermediate domain"/>
    <property type="match status" value="1"/>
</dbReference>
<dbReference type="InterPro" id="IPR012716">
    <property type="entry name" value="Chap_CCT_beta"/>
</dbReference>
<dbReference type="InterPro" id="IPR017998">
    <property type="entry name" value="Chaperone_TCP-1"/>
</dbReference>
<dbReference type="InterPro" id="IPR002194">
    <property type="entry name" value="Chaperonin_TCP-1_CS"/>
</dbReference>
<dbReference type="InterPro" id="IPR002423">
    <property type="entry name" value="Cpn60/GroEL/TCP-1"/>
</dbReference>
<dbReference type="InterPro" id="IPR027409">
    <property type="entry name" value="GroEL-like_apical_dom_sf"/>
</dbReference>
<dbReference type="InterPro" id="IPR027413">
    <property type="entry name" value="GROEL-like_equatorial_sf"/>
</dbReference>
<dbReference type="InterPro" id="IPR027410">
    <property type="entry name" value="TCP-1-like_intermed_sf"/>
</dbReference>
<dbReference type="InterPro" id="IPR053374">
    <property type="entry name" value="TCP-1_chaperonin"/>
</dbReference>
<dbReference type="NCBIfam" id="TIGR02341">
    <property type="entry name" value="chap_CCT_beta"/>
    <property type="match status" value="1"/>
</dbReference>
<dbReference type="NCBIfam" id="NF041083">
    <property type="entry name" value="thermosome_beta"/>
    <property type="match status" value="1"/>
</dbReference>
<dbReference type="PANTHER" id="PTHR11353">
    <property type="entry name" value="CHAPERONIN"/>
    <property type="match status" value="1"/>
</dbReference>
<dbReference type="Pfam" id="PF00118">
    <property type="entry name" value="Cpn60_TCP1"/>
    <property type="match status" value="1"/>
</dbReference>
<dbReference type="PRINTS" id="PR00304">
    <property type="entry name" value="TCOMPLEXTCP1"/>
</dbReference>
<dbReference type="SUPFAM" id="SSF52029">
    <property type="entry name" value="GroEL apical domain-like"/>
    <property type="match status" value="1"/>
</dbReference>
<dbReference type="SUPFAM" id="SSF48592">
    <property type="entry name" value="GroEL equatorial domain-like"/>
    <property type="match status" value="1"/>
</dbReference>
<dbReference type="SUPFAM" id="SSF54849">
    <property type="entry name" value="GroEL-intermediate domain like"/>
    <property type="match status" value="1"/>
</dbReference>
<dbReference type="PROSITE" id="PS00750">
    <property type="entry name" value="TCP1_1"/>
    <property type="match status" value="1"/>
</dbReference>
<dbReference type="PROSITE" id="PS00751">
    <property type="entry name" value="TCP1_2"/>
    <property type="match status" value="1"/>
</dbReference>
<dbReference type="PROSITE" id="PS00995">
    <property type="entry name" value="TCP1_3"/>
    <property type="match status" value="1"/>
</dbReference>